<organism>
    <name type="scientific">Salmonella paratyphi B (strain ATCC BAA-1250 / SPB7)</name>
    <dbReference type="NCBI Taxonomy" id="1016998"/>
    <lineage>
        <taxon>Bacteria</taxon>
        <taxon>Pseudomonadati</taxon>
        <taxon>Pseudomonadota</taxon>
        <taxon>Gammaproteobacteria</taxon>
        <taxon>Enterobacterales</taxon>
        <taxon>Enterobacteriaceae</taxon>
        <taxon>Salmonella</taxon>
    </lineage>
</organism>
<proteinExistence type="inferred from homology"/>
<comment type="function">
    <text evidence="1">Produces ATP from ADP in the presence of a proton gradient across the membrane. The gamma chain is believed to be important in regulating ATPase activity and the flow of protons through the CF(0) complex.</text>
</comment>
<comment type="subunit">
    <text evidence="1">F-type ATPases have 2 components, CF(1) - the catalytic core - and CF(0) - the membrane proton channel. CF(1) has five subunits: alpha(3), beta(3), gamma(1), delta(1), epsilon(1). CF(0) has three main subunits: a, b and c.</text>
</comment>
<comment type="subcellular location">
    <subcellularLocation>
        <location evidence="1">Cell inner membrane</location>
        <topology evidence="1">Peripheral membrane protein</topology>
    </subcellularLocation>
</comment>
<comment type="similarity">
    <text evidence="1">Belongs to the ATPase gamma chain family.</text>
</comment>
<evidence type="ECO:0000255" key="1">
    <source>
        <dbReference type="HAMAP-Rule" id="MF_00815"/>
    </source>
</evidence>
<protein>
    <recommendedName>
        <fullName evidence="1">ATP synthase gamma chain</fullName>
    </recommendedName>
    <alternativeName>
        <fullName evidence="1">ATP synthase F1 sector gamma subunit</fullName>
    </alternativeName>
    <alternativeName>
        <fullName evidence="1">F-ATPase gamma subunit</fullName>
    </alternativeName>
</protein>
<dbReference type="EMBL" id="CP000886">
    <property type="protein sequence ID" value="ABX70118.1"/>
    <property type="molecule type" value="Genomic_DNA"/>
</dbReference>
<dbReference type="RefSeq" id="WP_000896506.1">
    <property type="nucleotide sequence ID" value="NC_010102.1"/>
</dbReference>
<dbReference type="SMR" id="A9MXA7"/>
<dbReference type="GeneID" id="66758155"/>
<dbReference type="KEGG" id="spq:SPAB_04807"/>
<dbReference type="PATRIC" id="fig|1016998.12.peg.4522"/>
<dbReference type="HOGENOM" id="CLU_050669_0_1_6"/>
<dbReference type="BioCyc" id="SENT1016998:SPAB_RS19520-MONOMER"/>
<dbReference type="Proteomes" id="UP000008556">
    <property type="component" value="Chromosome"/>
</dbReference>
<dbReference type="GO" id="GO:0005886">
    <property type="term" value="C:plasma membrane"/>
    <property type="evidence" value="ECO:0007669"/>
    <property type="project" value="UniProtKB-SubCell"/>
</dbReference>
<dbReference type="GO" id="GO:0045259">
    <property type="term" value="C:proton-transporting ATP synthase complex"/>
    <property type="evidence" value="ECO:0007669"/>
    <property type="project" value="UniProtKB-KW"/>
</dbReference>
<dbReference type="GO" id="GO:0005524">
    <property type="term" value="F:ATP binding"/>
    <property type="evidence" value="ECO:0007669"/>
    <property type="project" value="UniProtKB-UniRule"/>
</dbReference>
<dbReference type="GO" id="GO:0046933">
    <property type="term" value="F:proton-transporting ATP synthase activity, rotational mechanism"/>
    <property type="evidence" value="ECO:0007669"/>
    <property type="project" value="UniProtKB-UniRule"/>
</dbReference>
<dbReference type="GO" id="GO:0042777">
    <property type="term" value="P:proton motive force-driven plasma membrane ATP synthesis"/>
    <property type="evidence" value="ECO:0007669"/>
    <property type="project" value="UniProtKB-UniRule"/>
</dbReference>
<dbReference type="CDD" id="cd12151">
    <property type="entry name" value="F1-ATPase_gamma"/>
    <property type="match status" value="1"/>
</dbReference>
<dbReference type="FunFam" id="1.10.287.80:FF:000005">
    <property type="entry name" value="ATP synthase gamma chain"/>
    <property type="match status" value="2"/>
</dbReference>
<dbReference type="FunFam" id="3.40.1380.10:FF:000001">
    <property type="entry name" value="ATP synthase gamma chain"/>
    <property type="match status" value="1"/>
</dbReference>
<dbReference type="Gene3D" id="3.40.1380.10">
    <property type="match status" value="1"/>
</dbReference>
<dbReference type="Gene3D" id="1.10.287.80">
    <property type="entry name" value="ATP synthase, gamma subunit, helix hairpin domain"/>
    <property type="match status" value="1"/>
</dbReference>
<dbReference type="HAMAP" id="MF_00815">
    <property type="entry name" value="ATP_synth_gamma_bact"/>
    <property type="match status" value="1"/>
</dbReference>
<dbReference type="InterPro" id="IPR035968">
    <property type="entry name" value="ATP_synth_F1_ATPase_gsu"/>
</dbReference>
<dbReference type="InterPro" id="IPR000131">
    <property type="entry name" value="ATP_synth_F1_gsu"/>
</dbReference>
<dbReference type="InterPro" id="IPR023632">
    <property type="entry name" value="ATP_synth_F1_gsu_CS"/>
</dbReference>
<dbReference type="NCBIfam" id="TIGR01146">
    <property type="entry name" value="ATPsyn_F1gamma"/>
    <property type="match status" value="1"/>
</dbReference>
<dbReference type="NCBIfam" id="NF004144">
    <property type="entry name" value="PRK05621.1-1"/>
    <property type="match status" value="1"/>
</dbReference>
<dbReference type="PANTHER" id="PTHR11693">
    <property type="entry name" value="ATP SYNTHASE GAMMA CHAIN"/>
    <property type="match status" value="1"/>
</dbReference>
<dbReference type="PANTHER" id="PTHR11693:SF22">
    <property type="entry name" value="ATP SYNTHASE SUBUNIT GAMMA, MITOCHONDRIAL"/>
    <property type="match status" value="1"/>
</dbReference>
<dbReference type="Pfam" id="PF00231">
    <property type="entry name" value="ATP-synt"/>
    <property type="match status" value="1"/>
</dbReference>
<dbReference type="PRINTS" id="PR00126">
    <property type="entry name" value="ATPASEGAMMA"/>
</dbReference>
<dbReference type="SUPFAM" id="SSF52943">
    <property type="entry name" value="ATP synthase (F1-ATPase), gamma subunit"/>
    <property type="match status" value="1"/>
</dbReference>
<dbReference type="PROSITE" id="PS00153">
    <property type="entry name" value="ATPASE_GAMMA"/>
    <property type="match status" value="1"/>
</dbReference>
<reference key="1">
    <citation type="submission" date="2007-11" db="EMBL/GenBank/DDBJ databases">
        <authorList>
            <consortium name="The Salmonella enterica serovar Paratyphi B Genome Sequencing Project"/>
            <person name="McClelland M."/>
            <person name="Sanderson E.K."/>
            <person name="Porwollik S."/>
            <person name="Spieth J."/>
            <person name="Clifton W.S."/>
            <person name="Fulton R."/>
            <person name="Cordes M."/>
            <person name="Wollam A."/>
            <person name="Shah N."/>
            <person name="Pepin K."/>
            <person name="Bhonagiri V."/>
            <person name="Nash W."/>
            <person name="Johnson M."/>
            <person name="Thiruvilangam P."/>
            <person name="Wilson R."/>
        </authorList>
    </citation>
    <scope>NUCLEOTIDE SEQUENCE [LARGE SCALE GENOMIC DNA]</scope>
    <source>
        <strain>ATCC BAA-1250 / SPB7</strain>
    </source>
</reference>
<feature type="chain" id="PRO_1000083806" description="ATP synthase gamma chain">
    <location>
        <begin position="1"/>
        <end position="287"/>
    </location>
</feature>
<keyword id="KW-0066">ATP synthesis</keyword>
<keyword id="KW-0997">Cell inner membrane</keyword>
<keyword id="KW-1003">Cell membrane</keyword>
<keyword id="KW-0139">CF(1)</keyword>
<keyword id="KW-0375">Hydrogen ion transport</keyword>
<keyword id="KW-0406">Ion transport</keyword>
<keyword id="KW-0472">Membrane</keyword>
<keyword id="KW-0813">Transport</keyword>
<accession>A9MXA7</accession>
<gene>
    <name evidence="1" type="primary">atpG</name>
    <name type="ordered locus">SPAB_04807</name>
</gene>
<sequence>MAGAKEIRSKIASVQNTQKITKAMEMVAASKMRKSQDRMAASRPYAETMRKVIGHLANGNLEYKHPYLEERDVKRVGYLVVSTDRGLCGGLNINLFKKLLADMKAWSDKGVQCELAMIGSKGVSFFNSVGGNVVAQVTGMGDNPSLSELIGPVKVMLQAYDEGRLDKLYIVSNKFINTMSQVPTITQLLPLPASEDDDLKRKAWDYLYEPDPKALLDTLLRRYVESQVYQGVVENLASEQAARMVAMKAATDNGGSLIKELQLVYNKARQASITQELTEIVSGAAAV</sequence>
<name>ATPG_SALPB</name>